<feature type="chain" id="PRO_0000182475" description="Heat-inducible transcription repressor HrcA">
    <location>
        <begin position="1"/>
        <end position="342"/>
    </location>
</feature>
<reference key="1">
    <citation type="journal article" date="2003" name="Genome Res.">
        <title>Comparative complete genome sequence analysis of the amino acid replacements responsible for the thermostability of Corynebacterium efficiens.</title>
        <authorList>
            <person name="Nishio Y."/>
            <person name="Nakamura Y."/>
            <person name="Kawarabayasi Y."/>
            <person name="Usuda Y."/>
            <person name="Kimura E."/>
            <person name="Sugimoto S."/>
            <person name="Matsui K."/>
            <person name="Yamagishi A."/>
            <person name="Kikuchi H."/>
            <person name="Ikeo K."/>
            <person name="Gojobori T."/>
        </authorList>
    </citation>
    <scope>NUCLEOTIDE SEQUENCE [LARGE SCALE GENOMIC DNA]</scope>
    <source>
        <strain>DSM 44549 / YS-314 / AJ 12310 / JCM 11189 / NBRC 100395</strain>
    </source>
</reference>
<name>HRCA_COREF</name>
<dbReference type="EMBL" id="BA000035">
    <property type="protein sequence ID" value="BAC19000.1"/>
    <property type="status" value="ALT_INIT"/>
    <property type="molecule type" value="Genomic_DNA"/>
</dbReference>
<dbReference type="RefSeq" id="WP_006768193.1">
    <property type="nucleotide sequence ID" value="NC_004369.1"/>
</dbReference>
<dbReference type="SMR" id="Q8FNF4"/>
<dbReference type="STRING" id="196164.gene:10742621"/>
<dbReference type="KEGG" id="cef:CE2190"/>
<dbReference type="eggNOG" id="COG1420">
    <property type="taxonomic scope" value="Bacteria"/>
</dbReference>
<dbReference type="HOGENOM" id="CLU_050019_2_0_11"/>
<dbReference type="OrthoDB" id="9783139at2"/>
<dbReference type="Proteomes" id="UP000001409">
    <property type="component" value="Chromosome"/>
</dbReference>
<dbReference type="GO" id="GO:0003677">
    <property type="term" value="F:DNA binding"/>
    <property type="evidence" value="ECO:0007669"/>
    <property type="project" value="InterPro"/>
</dbReference>
<dbReference type="GO" id="GO:0045892">
    <property type="term" value="P:negative regulation of DNA-templated transcription"/>
    <property type="evidence" value="ECO:0007669"/>
    <property type="project" value="UniProtKB-UniRule"/>
</dbReference>
<dbReference type="FunFam" id="1.10.10.10:FF:000049">
    <property type="entry name" value="Heat-inducible transcription repressor HrcA"/>
    <property type="match status" value="1"/>
</dbReference>
<dbReference type="Gene3D" id="3.30.450.40">
    <property type="match status" value="1"/>
</dbReference>
<dbReference type="Gene3D" id="3.30.390.60">
    <property type="entry name" value="Heat-inducible transcription repressor hrca homolog, domain 3"/>
    <property type="match status" value="1"/>
</dbReference>
<dbReference type="Gene3D" id="1.10.10.10">
    <property type="entry name" value="Winged helix-like DNA-binding domain superfamily/Winged helix DNA-binding domain"/>
    <property type="match status" value="1"/>
</dbReference>
<dbReference type="HAMAP" id="MF_00081">
    <property type="entry name" value="HrcA"/>
    <property type="match status" value="1"/>
</dbReference>
<dbReference type="InterPro" id="IPR029016">
    <property type="entry name" value="GAF-like_dom_sf"/>
</dbReference>
<dbReference type="InterPro" id="IPR002571">
    <property type="entry name" value="HrcA"/>
</dbReference>
<dbReference type="InterPro" id="IPR021153">
    <property type="entry name" value="HrcA_C"/>
</dbReference>
<dbReference type="InterPro" id="IPR036388">
    <property type="entry name" value="WH-like_DNA-bd_sf"/>
</dbReference>
<dbReference type="InterPro" id="IPR036390">
    <property type="entry name" value="WH_DNA-bd_sf"/>
</dbReference>
<dbReference type="InterPro" id="IPR023120">
    <property type="entry name" value="WHTH_transcript_rep_HrcA_IDD"/>
</dbReference>
<dbReference type="NCBIfam" id="TIGR00331">
    <property type="entry name" value="hrcA"/>
    <property type="match status" value="1"/>
</dbReference>
<dbReference type="PANTHER" id="PTHR34824">
    <property type="entry name" value="HEAT-INDUCIBLE TRANSCRIPTION REPRESSOR HRCA"/>
    <property type="match status" value="1"/>
</dbReference>
<dbReference type="PANTHER" id="PTHR34824:SF1">
    <property type="entry name" value="HEAT-INDUCIBLE TRANSCRIPTION REPRESSOR HRCA"/>
    <property type="match status" value="1"/>
</dbReference>
<dbReference type="Pfam" id="PF01628">
    <property type="entry name" value="HrcA"/>
    <property type="match status" value="1"/>
</dbReference>
<dbReference type="PIRSF" id="PIRSF005485">
    <property type="entry name" value="HrcA"/>
    <property type="match status" value="1"/>
</dbReference>
<dbReference type="SUPFAM" id="SSF55781">
    <property type="entry name" value="GAF domain-like"/>
    <property type="match status" value="1"/>
</dbReference>
<dbReference type="SUPFAM" id="SSF46785">
    <property type="entry name" value="Winged helix' DNA-binding domain"/>
    <property type="match status" value="1"/>
</dbReference>
<gene>
    <name evidence="1" type="primary">hrcA</name>
    <name type="ordered locus">CE2190</name>
</gene>
<comment type="function">
    <text evidence="1">Negative regulator of class I heat shock genes (grpE-dnaK-dnaJ and groELS operons). Prevents heat-shock induction of these operons.</text>
</comment>
<comment type="similarity">
    <text evidence="1">Belongs to the HrcA family.</text>
</comment>
<comment type="sequence caution" evidence="2">
    <conflict type="erroneous initiation">
        <sequence resource="EMBL-CDS" id="BAC19000"/>
    </conflict>
</comment>
<evidence type="ECO:0000255" key="1">
    <source>
        <dbReference type="HAMAP-Rule" id="MF_00081"/>
    </source>
</evidence>
<evidence type="ECO:0000305" key="2"/>
<keyword id="KW-1185">Reference proteome</keyword>
<keyword id="KW-0678">Repressor</keyword>
<keyword id="KW-0346">Stress response</keyword>
<keyword id="KW-0804">Transcription</keyword>
<keyword id="KW-0805">Transcription regulation</keyword>
<accession>Q8FNF4</accession>
<proteinExistence type="inferred from homology"/>
<sequence length="342" mass="37058">MASATEKRRYEVLRAIVADYIESQEPVGSKALLERHKLNVSSATIRNDMSVLESDGYIVQEHASSGRVPTEKGYRLFVDSIHDIKPLSLAERRAILGFLEGGVDLEDVLRRSVQLLSQLTHQAAVVQLPTLKTARVKHCEVVSLSPVRLLLVLITDTGRVDQRNVELDEPLEADQVTVLKDLLNGALAEKTLTDASEALQELSRNAPSDIRSTMEKCSGVLVATLVEQPSDRLILAGASNLTRLTRETAASVPMVLEALEEQVVMLKLLSNVTDLDHVTVHIGEENEDLQLRSASVVTTGYGSAGNTLGGLGVVGPTYMDYPGTISKVSAVARYVGRVLAGE</sequence>
<protein>
    <recommendedName>
        <fullName evidence="1">Heat-inducible transcription repressor HrcA</fullName>
    </recommendedName>
</protein>
<organism>
    <name type="scientific">Corynebacterium efficiens (strain DSM 44549 / YS-314 / AJ 12310 / JCM 11189 / NBRC 100395)</name>
    <dbReference type="NCBI Taxonomy" id="196164"/>
    <lineage>
        <taxon>Bacteria</taxon>
        <taxon>Bacillati</taxon>
        <taxon>Actinomycetota</taxon>
        <taxon>Actinomycetes</taxon>
        <taxon>Mycobacteriales</taxon>
        <taxon>Corynebacteriaceae</taxon>
        <taxon>Corynebacterium</taxon>
    </lineage>
</organism>